<keyword id="KW-0131">Cell cycle</keyword>
<keyword id="KW-0132">Cell division</keyword>
<keyword id="KW-0133">Cell shape</keyword>
<keyword id="KW-0175">Coiled coil</keyword>
<keyword id="KW-0963">Cytoplasm</keyword>
<keyword id="KW-1185">Reference proteome</keyword>
<comment type="function">
    <text evidence="1">Divisome component that associates with the complex late in its assembly, after the Z-ring is formed, and is dependent on DivIC and PBP2B for its recruitment to the divisome. Together with EzrA, is a key component of the system that regulates PBP1 localization during cell cycle progression. Its main role could be the removal of PBP1 from the cell pole after pole maturation is completed. Also contributes to the recruitment of PBP1 to the division complex. Not essential for septum formation.</text>
</comment>
<comment type="subunit">
    <text evidence="1">Forms polymers through the coiled coil domains. Interacts with PBP1, MreC and EzrA.</text>
</comment>
<comment type="subcellular location">
    <subcellularLocation>
        <location evidence="1">Cytoplasm</location>
    </subcellularLocation>
    <text evidence="1">Shuttles between the lateral wall and the division site in a cell cycle-dependent manner.</text>
</comment>
<comment type="similarity">
    <text evidence="1">Belongs to the GpsB family.</text>
</comment>
<evidence type="ECO:0000255" key="1">
    <source>
        <dbReference type="HAMAP-Rule" id="MF_02011"/>
    </source>
</evidence>
<name>GPSB_GEOKA</name>
<protein>
    <recommendedName>
        <fullName evidence="1">Cell cycle protein GpsB</fullName>
    </recommendedName>
    <alternativeName>
        <fullName evidence="1">Guiding PBP1-shuttling protein</fullName>
    </alternativeName>
</protein>
<proteinExistence type="inferred from homology"/>
<gene>
    <name evidence="1" type="primary">gpsB</name>
    <name type="ordered locus">GK1541</name>
</gene>
<reference key="1">
    <citation type="journal article" date="2004" name="Nucleic Acids Res.">
        <title>Thermoadaptation trait revealed by the genome sequence of thermophilic Geobacillus kaustophilus.</title>
        <authorList>
            <person name="Takami H."/>
            <person name="Takaki Y."/>
            <person name="Chee G.-J."/>
            <person name="Nishi S."/>
            <person name="Shimamura S."/>
            <person name="Suzuki H."/>
            <person name="Matsui S."/>
            <person name="Uchiyama I."/>
        </authorList>
    </citation>
    <scope>NUCLEOTIDE SEQUENCE [LARGE SCALE GENOMIC DNA]</scope>
    <source>
        <strain>HTA426</strain>
    </source>
</reference>
<accession>Q5KZR0</accession>
<feature type="chain" id="PRO_0000337917" description="Cell cycle protein GpsB">
    <location>
        <begin position="1"/>
        <end position="98"/>
    </location>
</feature>
<feature type="coiled-coil region" evidence="1">
    <location>
        <begin position="34"/>
        <end position="71"/>
    </location>
</feature>
<dbReference type="EMBL" id="BA000043">
    <property type="protein sequence ID" value="BAD75826.1"/>
    <property type="molecule type" value="Genomic_DNA"/>
</dbReference>
<dbReference type="RefSeq" id="WP_011231037.1">
    <property type="nucleotide sequence ID" value="NC_006510.1"/>
</dbReference>
<dbReference type="SMR" id="Q5KZR0"/>
<dbReference type="STRING" id="235909.GK1541"/>
<dbReference type="GeneID" id="32063450"/>
<dbReference type="KEGG" id="gka:GK1541"/>
<dbReference type="eggNOG" id="COG3599">
    <property type="taxonomic scope" value="Bacteria"/>
</dbReference>
<dbReference type="HOGENOM" id="CLU_140309_1_0_9"/>
<dbReference type="Proteomes" id="UP000001172">
    <property type="component" value="Chromosome"/>
</dbReference>
<dbReference type="GO" id="GO:0005737">
    <property type="term" value="C:cytoplasm"/>
    <property type="evidence" value="ECO:0007669"/>
    <property type="project" value="UniProtKB-SubCell"/>
</dbReference>
<dbReference type="GO" id="GO:0051301">
    <property type="term" value="P:cell division"/>
    <property type="evidence" value="ECO:0007669"/>
    <property type="project" value="UniProtKB-UniRule"/>
</dbReference>
<dbReference type="GO" id="GO:0008360">
    <property type="term" value="P:regulation of cell shape"/>
    <property type="evidence" value="ECO:0007669"/>
    <property type="project" value="UniProtKB-UniRule"/>
</dbReference>
<dbReference type="Gene3D" id="6.10.250.660">
    <property type="match status" value="1"/>
</dbReference>
<dbReference type="HAMAP" id="MF_02011">
    <property type="entry name" value="GpsB"/>
    <property type="match status" value="1"/>
</dbReference>
<dbReference type="InterPro" id="IPR011229">
    <property type="entry name" value="Cell_cycle_GpsB"/>
</dbReference>
<dbReference type="InterPro" id="IPR019933">
    <property type="entry name" value="DivIVA_domain"/>
</dbReference>
<dbReference type="InterPro" id="IPR007793">
    <property type="entry name" value="DivIVA_fam"/>
</dbReference>
<dbReference type="NCBIfam" id="TIGR03544">
    <property type="entry name" value="DivI1A_domain"/>
    <property type="match status" value="1"/>
</dbReference>
<dbReference type="NCBIfam" id="NF010725">
    <property type="entry name" value="PRK14127.1"/>
    <property type="match status" value="1"/>
</dbReference>
<dbReference type="PANTHER" id="PTHR35794:SF1">
    <property type="entry name" value="CELL CYCLE PROTEIN GPSB"/>
    <property type="match status" value="1"/>
</dbReference>
<dbReference type="PANTHER" id="PTHR35794">
    <property type="entry name" value="CELL DIVISION PROTEIN DIVIVA"/>
    <property type="match status" value="1"/>
</dbReference>
<dbReference type="Pfam" id="PF05103">
    <property type="entry name" value="DivIVA"/>
    <property type="match status" value="1"/>
</dbReference>
<dbReference type="PIRSF" id="PIRSF029938">
    <property type="entry name" value="UCP029938"/>
    <property type="match status" value="1"/>
</dbReference>
<dbReference type="SUPFAM" id="SSF75704">
    <property type="entry name" value="Mitotic arrest deficient-like 1, Mad1"/>
    <property type="match status" value="1"/>
</dbReference>
<sequence>MSAHQVKLTPKDILEKEFKVSIRGYNQDEVDQFLDLIIKDYEAFQQEIDELRQENARLKRQVEELQKRPAMSAGTTNYDILQRLSNLEKHVFGRKLYE</sequence>
<organism>
    <name type="scientific">Geobacillus kaustophilus (strain HTA426)</name>
    <dbReference type="NCBI Taxonomy" id="235909"/>
    <lineage>
        <taxon>Bacteria</taxon>
        <taxon>Bacillati</taxon>
        <taxon>Bacillota</taxon>
        <taxon>Bacilli</taxon>
        <taxon>Bacillales</taxon>
        <taxon>Anoxybacillaceae</taxon>
        <taxon>Geobacillus</taxon>
        <taxon>Geobacillus thermoleovorans group</taxon>
    </lineage>
</organism>